<protein>
    <recommendedName>
        <fullName evidence="1">Xaa-Pro dipeptidase</fullName>
        <shortName evidence="1">X-Pro dipeptidase</shortName>
        <ecNumber evidence="1">3.4.13.9</ecNumber>
    </recommendedName>
    <alternativeName>
        <fullName evidence="1">Imidodipeptidase</fullName>
    </alternativeName>
    <alternativeName>
        <fullName evidence="1">Proline dipeptidase</fullName>
        <shortName evidence="1">Prolidase</shortName>
    </alternativeName>
</protein>
<evidence type="ECO:0000255" key="1">
    <source>
        <dbReference type="HAMAP-Rule" id="MF_01279"/>
    </source>
</evidence>
<sequence>MTQPSLNSLYSDHLRTLTARADEALQRGGFAHLVVPSGNTHYQLFDDRDYPYAVNPQFKAWLPLTRVPHSWLVYTPGKRPIVIFYQPFDYWHVVPDAPSGWWVEHCDIHIIRRPDEALALLPKQAERCAILGEAQSTLGAYVPNNPQPVLDYLEYQRAFKTAYELALLRIAQQLAVRGHRAAEAAFRAGQSEFGIHMAYCAAVGQDANELPYGNIIALNEHGAVLHYTELGQQPPQPLRSFLIDAGASAYGYASDITRTYAADPGSDFQALINAVDAAQLRMGQNVRAGVDYKQLHIDAHLALMGILKEFGVLTVSPEAALATGISAAFFPHGLGHLIGLQVHDVAGFAASDRGGRIQRPEGHPYLRLTRVLEPGMVVTIEPGVYFIDMLLDEVKKNGHAASVNWQRVEAFKPYGGIRIEDEVVCTDGNAENLTRPVFAAA</sequence>
<name>PEPQ_XANOM</name>
<dbReference type="EC" id="3.4.13.9" evidence="1"/>
<dbReference type="EMBL" id="AP008229">
    <property type="protein sequence ID" value="BAE67789.1"/>
    <property type="molecule type" value="Genomic_DNA"/>
</dbReference>
<dbReference type="RefSeq" id="WP_011257975.1">
    <property type="nucleotide sequence ID" value="NC_007705.1"/>
</dbReference>
<dbReference type="SMR" id="Q2P6N8"/>
<dbReference type="MEROPS" id="M24.003"/>
<dbReference type="KEGG" id="xom:XOO1034"/>
<dbReference type="HOGENOM" id="CLU_050675_0_0_6"/>
<dbReference type="GO" id="GO:0005829">
    <property type="term" value="C:cytosol"/>
    <property type="evidence" value="ECO:0007669"/>
    <property type="project" value="TreeGrafter"/>
</dbReference>
<dbReference type="GO" id="GO:0004177">
    <property type="term" value="F:aminopeptidase activity"/>
    <property type="evidence" value="ECO:0007669"/>
    <property type="project" value="TreeGrafter"/>
</dbReference>
<dbReference type="GO" id="GO:0046872">
    <property type="term" value="F:metal ion binding"/>
    <property type="evidence" value="ECO:0007669"/>
    <property type="project" value="UniProtKB-KW"/>
</dbReference>
<dbReference type="GO" id="GO:0008235">
    <property type="term" value="F:metalloexopeptidase activity"/>
    <property type="evidence" value="ECO:0007669"/>
    <property type="project" value="UniProtKB-UniRule"/>
</dbReference>
<dbReference type="GO" id="GO:0016795">
    <property type="term" value="F:phosphoric triester hydrolase activity"/>
    <property type="evidence" value="ECO:0007669"/>
    <property type="project" value="InterPro"/>
</dbReference>
<dbReference type="GO" id="GO:0102009">
    <property type="term" value="F:proline dipeptidase activity"/>
    <property type="evidence" value="ECO:0007669"/>
    <property type="project" value="UniProtKB-EC"/>
</dbReference>
<dbReference type="GO" id="GO:0006508">
    <property type="term" value="P:proteolysis"/>
    <property type="evidence" value="ECO:0007669"/>
    <property type="project" value="UniProtKB-KW"/>
</dbReference>
<dbReference type="CDD" id="cd01087">
    <property type="entry name" value="Prolidase"/>
    <property type="match status" value="1"/>
</dbReference>
<dbReference type="Gene3D" id="3.90.230.10">
    <property type="entry name" value="Creatinase/methionine aminopeptidase superfamily"/>
    <property type="match status" value="1"/>
</dbReference>
<dbReference type="Gene3D" id="3.40.350.10">
    <property type="entry name" value="Creatinase/prolidase N-terminal domain"/>
    <property type="match status" value="1"/>
</dbReference>
<dbReference type="HAMAP" id="MF_01279">
    <property type="entry name" value="X_Pro_dipeptid"/>
    <property type="match status" value="1"/>
</dbReference>
<dbReference type="InterPro" id="IPR029149">
    <property type="entry name" value="Creatin/AminoP/Spt16_N"/>
</dbReference>
<dbReference type="InterPro" id="IPR036005">
    <property type="entry name" value="Creatinase/aminopeptidase-like"/>
</dbReference>
<dbReference type="InterPro" id="IPR048819">
    <property type="entry name" value="PepQ_N"/>
</dbReference>
<dbReference type="InterPro" id="IPR000994">
    <property type="entry name" value="Pept_M24"/>
</dbReference>
<dbReference type="InterPro" id="IPR001131">
    <property type="entry name" value="Peptidase_M24B_aminopep-P_CS"/>
</dbReference>
<dbReference type="InterPro" id="IPR052433">
    <property type="entry name" value="X-Pro_dipept-like"/>
</dbReference>
<dbReference type="InterPro" id="IPR022846">
    <property type="entry name" value="X_Pro_dipept"/>
</dbReference>
<dbReference type="NCBIfam" id="NF010133">
    <property type="entry name" value="PRK13607.1"/>
    <property type="match status" value="1"/>
</dbReference>
<dbReference type="PANTHER" id="PTHR43226">
    <property type="entry name" value="XAA-PRO AMINOPEPTIDASE 3"/>
    <property type="match status" value="1"/>
</dbReference>
<dbReference type="PANTHER" id="PTHR43226:SF8">
    <property type="entry name" value="XAA-PRO DIPEPTIDASE"/>
    <property type="match status" value="1"/>
</dbReference>
<dbReference type="Pfam" id="PF21216">
    <property type="entry name" value="PepQ_N"/>
    <property type="match status" value="1"/>
</dbReference>
<dbReference type="Pfam" id="PF00557">
    <property type="entry name" value="Peptidase_M24"/>
    <property type="match status" value="1"/>
</dbReference>
<dbReference type="SUPFAM" id="SSF55920">
    <property type="entry name" value="Creatinase/aminopeptidase"/>
    <property type="match status" value="1"/>
</dbReference>
<dbReference type="PROSITE" id="PS00491">
    <property type="entry name" value="PROLINE_PEPTIDASE"/>
    <property type="match status" value="1"/>
</dbReference>
<feature type="chain" id="PRO_0000303877" description="Xaa-Pro dipeptidase">
    <location>
        <begin position="1"/>
        <end position="441"/>
    </location>
</feature>
<feature type="binding site" evidence="1">
    <location>
        <position position="244"/>
    </location>
    <ligand>
        <name>Mn(2+)</name>
        <dbReference type="ChEBI" id="CHEBI:29035"/>
        <label>2</label>
    </ligand>
</feature>
<feature type="binding site" evidence="1">
    <location>
        <position position="255"/>
    </location>
    <ligand>
        <name>Mn(2+)</name>
        <dbReference type="ChEBI" id="CHEBI:29035"/>
        <label>1</label>
    </ligand>
</feature>
<feature type="binding site" evidence="1">
    <location>
        <position position="255"/>
    </location>
    <ligand>
        <name>Mn(2+)</name>
        <dbReference type="ChEBI" id="CHEBI:29035"/>
        <label>2</label>
    </ligand>
</feature>
<feature type="binding site" evidence="1">
    <location>
        <position position="336"/>
    </location>
    <ligand>
        <name>Mn(2+)</name>
        <dbReference type="ChEBI" id="CHEBI:29035"/>
        <label>1</label>
    </ligand>
</feature>
<feature type="binding site" evidence="1">
    <location>
        <position position="381"/>
    </location>
    <ligand>
        <name>Mn(2+)</name>
        <dbReference type="ChEBI" id="CHEBI:29035"/>
        <label>1</label>
    </ligand>
</feature>
<feature type="binding site" evidence="1">
    <location>
        <position position="420"/>
    </location>
    <ligand>
        <name>Mn(2+)</name>
        <dbReference type="ChEBI" id="CHEBI:29035"/>
        <label>1</label>
    </ligand>
</feature>
<feature type="binding site" evidence="1">
    <location>
        <position position="420"/>
    </location>
    <ligand>
        <name>Mn(2+)</name>
        <dbReference type="ChEBI" id="CHEBI:29035"/>
        <label>2</label>
    </ligand>
</feature>
<proteinExistence type="inferred from homology"/>
<accession>Q2P6N8</accession>
<comment type="function">
    <text evidence="1">Splits dipeptides with a prolyl residue in the C-terminal position.</text>
</comment>
<comment type="catalytic activity">
    <reaction evidence="1">
        <text>Xaa-L-Pro dipeptide + H2O = an L-alpha-amino acid + L-proline</text>
        <dbReference type="Rhea" id="RHEA:76407"/>
        <dbReference type="ChEBI" id="CHEBI:15377"/>
        <dbReference type="ChEBI" id="CHEBI:59869"/>
        <dbReference type="ChEBI" id="CHEBI:60039"/>
        <dbReference type="ChEBI" id="CHEBI:195196"/>
        <dbReference type="EC" id="3.4.13.9"/>
    </reaction>
</comment>
<comment type="cofactor">
    <cofactor evidence="1">
        <name>Mn(2+)</name>
        <dbReference type="ChEBI" id="CHEBI:29035"/>
    </cofactor>
    <text evidence="1">Binds 2 manganese ions per subunit.</text>
</comment>
<comment type="similarity">
    <text evidence="1">Belongs to the peptidase M24B family. Bacterial-type prolidase subfamily.</text>
</comment>
<reference key="1">
    <citation type="journal article" date="2005" name="Jpn. Agric. Res. Q.">
        <title>Genome sequence of Xanthomonas oryzae pv. oryzae suggests contribution of large numbers of effector genes and insertion sequences to its race diversity.</title>
        <authorList>
            <person name="Ochiai H."/>
            <person name="Inoue Y."/>
            <person name="Takeya M."/>
            <person name="Sasaki A."/>
            <person name="Kaku H."/>
        </authorList>
    </citation>
    <scope>NUCLEOTIDE SEQUENCE [LARGE SCALE GENOMIC DNA]</scope>
    <source>
        <strain>MAFF 311018</strain>
    </source>
</reference>
<organism>
    <name type="scientific">Xanthomonas oryzae pv. oryzae (strain MAFF 311018)</name>
    <dbReference type="NCBI Taxonomy" id="342109"/>
    <lineage>
        <taxon>Bacteria</taxon>
        <taxon>Pseudomonadati</taxon>
        <taxon>Pseudomonadota</taxon>
        <taxon>Gammaproteobacteria</taxon>
        <taxon>Lysobacterales</taxon>
        <taxon>Lysobacteraceae</taxon>
        <taxon>Xanthomonas</taxon>
    </lineage>
</organism>
<gene>
    <name evidence="1" type="primary">pepQ</name>
    <name type="ordered locus">XOO1034</name>
</gene>
<keyword id="KW-0224">Dipeptidase</keyword>
<keyword id="KW-0378">Hydrolase</keyword>
<keyword id="KW-0464">Manganese</keyword>
<keyword id="KW-0479">Metal-binding</keyword>
<keyword id="KW-0482">Metalloprotease</keyword>
<keyword id="KW-0645">Protease</keyword>